<gene>
    <name evidence="1" type="primary">fabR</name>
    <name type="ordered locus">STM4127</name>
</gene>
<proteinExistence type="inferred from homology"/>
<comment type="function">
    <text evidence="1">Represses the transcription of fabB, involved in unsaturated fatty acid (UFA) biosynthesis. By controlling UFA production, FabR directly influences the physical properties of the membrane bilayer.</text>
</comment>
<comment type="subunit">
    <text evidence="1">Homodimer.</text>
</comment>
<comment type="subcellular location">
    <subcellularLocation>
        <location evidence="1">Cytoplasm</location>
    </subcellularLocation>
</comment>
<comment type="sequence caution" evidence="2">
    <conflict type="erroneous initiation">
        <sequence resource="EMBL-CDS" id="AAL22965"/>
    </conflict>
</comment>
<keyword id="KW-0963">Cytoplasm</keyword>
<keyword id="KW-0238">DNA-binding</keyword>
<keyword id="KW-0275">Fatty acid biosynthesis</keyword>
<keyword id="KW-0276">Fatty acid metabolism</keyword>
<keyword id="KW-0444">Lipid biosynthesis</keyword>
<keyword id="KW-0443">Lipid metabolism</keyword>
<keyword id="KW-1185">Reference proteome</keyword>
<keyword id="KW-0678">Repressor</keyword>
<keyword id="KW-0804">Transcription</keyword>
<keyword id="KW-0805">Transcription regulation</keyword>
<organism>
    <name type="scientific">Salmonella typhimurium (strain LT2 / SGSC1412 / ATCC 700720)</name>
    <dbReference type="NCBI Taxonomy" id="99287"/>
    <lineage>
        <taxon>Bacteria</taxon>
        <taxon>Pseudomonadati</taxon>
        <taxon>Pseudomonadota</taxon>
        <taxon>Gammaproteobacteria</taxon>
        <taxon>Enterobacterales</taxon>
        <taxon>Enterobacteriaceae</taxon>
        <taxon>Salmonella</taxon>
    </lineage>
</organism>
<reference key="1">
    <citation type="journal article" date="2001" name="Nature">
        <title>Complete genome sequence of Salmonella enterica serovar Typhimurium LT2.</title>
        <authorList>
            <person name="McClelland M."/>
            <person name="Sanderson K.E."/>
            <person name="Spieth J."/>
            <person name="Clifton S.W."/>
            <person name="Latreille P."/>
            <person name="Courtney L."/>
            <person name="Porwollik S."/>
            <person name="Ali J."/>
            <person name="Dante M."/>
            <person name="Du F."/>
            <person name="Hou S."/>
            <person name="Layman D."/>
            <person name="Leonard S."/>
            <person name="Nguyen C."/>
            <person name="Scott K."/>
            <person name="Holmes A."/>
            <person name="Grewal N."/>
            <person name="Mulvaney E."/>
            <person name="Ryan E."/>
            <person name="Sun H."/>
            <person name="Florea L."/>
            <person name="Miller W."/>
            <person name="Stoneking T."/>
            <person name="Nhan M."/>
            <person name="Waterston R."/>
            <person name="Wilson R.K."/>
        </authorList>
    </citation>
    <scope>NUCLEOTIDE SEQUENCE [LARGE SCALE GENOMIC DNA]</scope>
    <source>
        <strain>LT2 / SGSC1412 / ATCC 700720</strain>
    </source>
</reference>
<feature type="chain" id="PRO_0000293573" description="HTH-type transcriptional repressor FabR">
    <location>
        <begin position="1"/>
        <end position="210"/>
    </location>
</feature>
<feature type="domain" description="HTH tetR-type" evidence="1">
    <location>
        <begin position="10"/>
        <end position="70"/>
    </location>
</feature>
<feature type="DNA-binding region" description="H-T-H motif" evidence="1">
    <location>
        <begin position="33"/>
        <end position="52"/>
    </location>
</feature>
<dbReference type="EMBL" id="AE006468">
    <property type="protein sequence ID" value="AAL22965.1"/>
    <property type="status" value="ALT_INIT"/>
    <property type="molecule type" value="Genomic_DNA"/>
</dbReference>
<dbReference type="SMR" id="Q7CPB8"/>
<dbReference type="STRING" id="99287.STM4127"/>
<dbReference type="PaxDb" id="99287-STM4127"/>
<dbReference type="KEGG" id="stm:STM4127"/>
<dbReference type="PATRIC" id="fig|99287.12.peg.4348"/>
<dbReference type="HOGENOM" id="CLU_081861_0_0_6"/>
<dbReference type="OMA" id="AYWYRKE"/>
<dbReference type="PhylomeDB" id="Q7CPB8"/>
<dbReference type="Proteomes" id="UP000001014">
    <property type="component" value="Chromosome"/>
</dbReference>
<dbReference type="GO" id="GO:0005737">
    <property type="term" value="C:cytoplasm"/>
    <property type="evidence" value="ECO:0007669"/>
    <property type="project" value="UniProtKB-SubCell"/>
</dbReference>
<dbReference type="GO" id="GO:0003677">
    <property type="term" value="F:DNA binding"/>
    <property type="evidence" value="ECO:0007669"/>
    <property type="project" value="UniProtKB-KW"/>
</dbReference>
<dbReference type="GO" id="GO:0003700">
    <property type="term" value="F:DNA-binding transcription factor activity"/>
    <property type="evidence" value="ECO:0007669"/>
    <property type="project" value="UniProtKB-UniRule"/>
</dbReference>
<dbReference type="GO" id="GO:0006633">
    <property type="term" value="P:fatty acid biosynthetic process"/>
    <property type="evidence" value="ECO:0007669"/>
    <property type="project" value="UniProtKB-UniRule"/>
</dbReference>
<dbReference type="GO" id="GO:0045717">
    <property type="term" value="P:negative regulation of fatty acid biosynthetic process"/>
    <property type="evidence" value="ECO:0007669"/>
    <property type="project" value="UniProtKB-UniRule"/>
</dbReference>
<dbReference type="FunFam" id="1.10.10.60:FF:000034">
    <property type="entry name" value="HTH-type transcriptional repressor FabR"/>
    <property type="match status" value="1"/>
</dbReference>
<dbReference type="FunFam" id="1.10.357.10:FF:000001">
    <property type="entry name" value="HTH-type transcriptional repressor FabR"/>
    <property type="match status" value="1"/>
</dbReference>
<dbReference type="Gene3D" id="1.10.10.60">
    <property type="entry name" value="Homeodomain-like"/>
    <property type="match status" value="1"/>
</dbReference>
<dbReference type="Gene3D" id="1.10.357.10">
    <property type="entry name" value="Tetracycline Repressor, domain 2"/>
    <property type="match status" value="1"/>
</dbReference>
<dbReference type="HAMAP" id="MF_01190">
    <property type="entry name" value="HTH_type_FabR"/>
    <property type="match status" value="1"/>
</dbReference>
<dbReference type="InterPro" id="IPR054129">
    <property type="entry name" value="DesT_TetR_C"/>
</dbReference>
<dbReference type="InterPro" id="IPR009057">
    <property type="entry name" value="Homeodomain-like_sf"/>
</dbReference>
<dbReference type="InterPro" id="IPR001647">
    <property type="entry name" value="HTH_TetR"/>
</dbReference>
<dbReference type="InterPro" id="IPR050692">
    <property type="entry name" value="HTH_transcr_repressor_FabR"/>
</dbReference>
<dbReference type="InterPro" id="IPR023764">
    <property type="entry name" value="Tscrpt_reg_HTH_FabR"/>
</dbReference>
<dbReference type="NCBIfam" id="NF008402">
    <property type="entry name" value="PRK11202.1"/>
    <property type="match status" value="1"/>
</dbReference>
<dbReference type="PANTHER" id="PTHR47752">
    <property type="entry name" value="HTH-TYPE TRANSCRIPTIONAL REPRESSOR FABR"/>
    <property type="match status" value="1"/>
</dbReference>
<dbReference type="PANTHER" id="PTHR47752:SF1">
    <property type="entry name" value="HTH-TYPE TRANSCRIPTIONAL REPRESSOR FABR"/>
    <property type="match status" value="1"/>
</dbReference>
<dbReference type="Pfam" id="PF21943">
    <property type="entry name" value="TetR_C_46"/>
    <property type="match status" value="1"/>
</dbReference>
<dbReference type="Pfam" id="PF00440">
    <property type="entry name" value="TetR_N"/>
    <property type="match status" value="1"/>
</dbReference>
<dbReference type="SUPFAM" id="SSF46689">
    <property type="entry name" value="Homeodomain-like"/>
    <property type="match status" value="1"/>
</dbReference>
<dbReference type="PROSITE" id="PS50977">
    <property type="entry name" value="HTH_TETR_2"/>
    <property type="match status" value="1"/>
</dbReference>
<accession>Q7CPB8</accession>
<protein>
    <recommendedName>
        <fullName evidence="1">HTH-type transcriptional repressor FabR</fullName>
    </recommendedName>
</protein>
<sequence>MGVRAQQKEKTRRSLVEAAFSQLSAERSFASLSLREVAREAGIAPTSFYRHFRDVDELGLTMVDESGLMLRQLMRQARQRIAKGGSVIRTSVSTFMEFIGNNPNAFRLLLRERSGTSAAFRAAVAREIQHFIAELADYLELENHMPRAFTEAQAEAMVTIVFSAGAEALDIGAEQRRQLEERLVLQLRMIAKGAYYWYRREQEKIAHHSE</sequence>
<name>FABR_SALTY</name>
<evidence type="ECO:0000255" key="1">
    <source>
        <dbReference type="HAMAP-Rule" id="MF_01190"/>
    </source>
</evidence>
<evidence type="ECO:0000305" key="2"/>